<name>RL24_BIFLO</name>
<gene>
    <name evidence="1" type="primary">rplX</name>
    <name type="ordered locus">BL1591</name>
</gene>
<dbReference type="EMBL" id="AE014295">
    <property type="protein sequence ID" value="AAN25380.1"/>
    <property type="molecule type" value="Genomic_DNA"/>
</dbReference>
<dbReference type="RefSeq" id="NP_696744.1">
    <property type="nucleotide sequence ID" value="NC_004307.2"/>
</dbReference>
<dbReference type="RefSeq" id="WP_007053803.1">
    <property type="nucleotide sequence ID" value="NC_004307.2"/>
</dbReference>
<dbReference type="SMR" id="Q8G407"/>
<dbReference type="STRING" id="206672.BL1591"/>
<dbReference type="EnsemblBacteria" id="AAN25380">
    <property type="protein sequence ID" value="AAN25380"/>
    <property type="gene ID" value="BL1591"/>
</dbReference>
<dbReference type="GeneID" id="69578886"/>
<dbReference type="KEGG" id="blo:BL1591"/>
<dbReference type="PATRIC" id="fig|206672.9.peg.1646"/>
<dbReference type="HOGENOM" id="CLU_093315_2_0_11"/>
<dbReference type="OrthoDB" id="9807419at2"/>
<dbReference type="PhylomeDB" id="Q8G407"/>
<dbReference type="Proteomes" id="UP000000439">
    <property type="component" value="Chromosome"/>
</dbReference>
<dbReference type="GO" id="GO:1990904">
    <property type="term" value="C:ribonucleoprotein complex"/>
    <property type="evidence" value="ECO:0007669"/>
    <property type="project" value="UniProtKB-KW"/>
</dbReference>
<dbReference type="GO" id="GO:0005840">
    <property type="term" value="C:ribosome"/>
    <property type="evidence" value="ECO:0007669"/>
    <property type="project" value="UniProtKB-KW"/>
</dbReference>
<dbReference type="GO" id="GO:0019843">
    <property type="term" value="F:rRNA binding"/>
    <property type="evidence" value="ECO:0007669"/>
    <property type="project" value="UniProtKB-UniRule"/>
</dbReference>
<dbReference type="GO" id="GO:0003735">
    <property type="term" value="F:structural constituent of ribosome"/>
    <property type="evidence" value="ECO:0007669"/>
    <property type="project" value="InterPro"/>
</dbReference>
<dbReference type="GO" id="GO:0006412">
    <property type="term" value="P:translation"/>
    <property type="evidence" value="ECO:0007669"/>
    <property type="project" value="UniProtKB-UniRule"/>
</dbReference>
<dbReference type="CDD" id="cd06089">
    <property type="entry name" value="KOW_RPL26"/>
    <property type="match status" value="1"/>
</dbReference>
<dbReference type="Gene3D" id="2.30.30.30">
    <property type="match status" value="1"/>
</dbReference>
<dbReference type="HAMAP" id="MF_01326_B">
    <property type="entry name" value="Ribosomal_uL24_B"/>
    <property type="match status" value="1"/>
</dbReference>
<dbReference type="InterPro" id="IPR005824">
    <property type="entry name" value="KOW"/>
</dbReference>
<dbReference type="InterPro" id="IPR014722">
    <property type="entry name" value="Rib_uL2_dom2"/>
</dbReference>
<dbReference type="InterPro" id="IPR003256">
    <property type="entry name" value="Ribosomal_uL24"/>
</dbReference>
<dbReference type="InterPro" id="IPR005825">
    <property type="entry name" value="Ribosomal_uL24_CS"/>
</dbReference>
<dbReference type="InterPro" id="IPR041988">
    <property type="entry name" value="Ribosomal_uL24_KOW"/>
</dbReference>
<dbReference type="InterPro" id="IPR008991">
    <property type="entry name" value="Translation_prot_SH3-like_sf"/>
</dbReference>
<dbReference type="NCBIfam" id="TIGR01079">
    <property type="entry name" value="rplX_bact"/>
    <property type="match status" value="1"/>
</dbReference>
<dbReference type="PANTHER" id="PTHR12903">
    <property type="entry name" value="MITOCHONDRIAL RIBOSOMAL PROTEIN L24"/>
    <property type="match status" value="1"/>
</dbReference>
<dbReference type="Pfam" id="PF00467">
    <property type="entry name" value="KOW"/>
    <property type="match status" value="1"/>
</dbReference>
<dbReference type="Pfam" id="PF17136">
    <property type="entry name" value="ribosomal_L24"/>
    <property type="match status" value="1"/>
</dbReference>
<dbReference type="SMART" id="SM00739">
    <property type="entry name" value="KOW"/>
    <property type="match status" value="1"/>
</dbReference>
<dbReference type="SUPFAM" id="SSF50104">
    <property type="entry name" value="Translation proteins SH3-like domain"/>
    <property type="match status" value="1"/>
</dbReference>
<dbReference type="PROSITE" id="PS01108">
    <property type="entry name" value="RIBOSOMAL_L24"/>
    <property type="match status" value="1"/>
</dbReference>
<proteinExistence type="inferred from homology"/>
<accession>Q8G407</accession>
<protein>
    <recommendedName>
        <fullName evidence="1">Large ribosomal subunit protein uL24</fullName>
    </recommendedName>
    <alternativeName>
        <fullName evidence="2">50S ribosomal protein L24</fullName>
    </alternativeName>
</protein>
<keyword id="KW-1185">Reference proteome</keyword>
<keyword id="KW-0687">Ribonucleoprotein</keyword>
<keyword id="KW-0689">Ribosomal protein</keyword>
<keyword id="KW-0694">RNA-binding</keyword>
<keyword id="KW-0699">rRNA-binding</keyword>
<comment type="function">
    <text evidence="1">One of two assembly initiator proteins, it binds directly to the 5'-end of the 23S rRNA, where it nucleates assembly of the 50S subunit.</text>
</comment>
<comment type="function">
    <text evidence="1">One of the proteins that surrounds the polypeptide exit tunnel on the outside of the subunit.</text>
</comment>
<comment type="subunit">
    <text evidence="1">Part of the 50S ribosomal subunit.</text>
</comment>
<comment type="similarity">
    <text evidence="1">Belongs to the universal ribosomal protein uL24 family.</text>
</comment>
<reference key="1">
    <citation type="journal article" date="2002" name="Proc. Natl. Acad. Sci. U.S.A.">
        <title>The genome sequence of Bifidobacterium longum reflects its adaptation to the human gastrointestinal tract.</title>
        <authorList>
            <person name="Schell M.A."/>
            <person name="Karmirantzou M."/>
            <person name="Snel B."/>
            <person name="Vilanova D."/>
            <person name="Berger B."/>
            <person name="Pessi G."/>
            <person name="Zwahlen M.-C."/>
            <person name="Desiere F."/>
            <person name="Bork P."/>
            <person name="Delley M."/>
            <person name="Pridmore R.D."/>
            <person name="Arigoni F."/>
        </authorList>
    </citation>
    <scope>NUCLEOTIDE SEQUENCE [LARGE SCALE GENOMIC DNA]</scope>
    <source>
        <strain>NCC 2705</strain>
    </source>
</reference>
<sequence length="111" mass="12104">MAAKIKSGDLVKVIRGKDRGKEGTVKQVLSNDRLIVEGVQIVKKHVRATQQGQQAGIVSTEAPIHRSNVMVIDPETKQPTRVGITVKEEARDGKVKTVRVRVAKKSGKELA</sequence>
<feature type="chain" id="PRO_0000130625" description="Large ribosomal subunit protein uL24">
    <location>
        <begin position="1"/>
        <end position="111"/>
    </location>
</feature>
<organism>
    <name type="scientific">Bifidobacterium longum (strain NCC 2705)</name>
    <dbReference type="NCBI Taxonomy" id="206672"/>
    <lineage>
        <taxon>Bacteria</taxon>
        <taxon>Bacillati</taxon>
        <taxon>Actinomycetota</taxon>
        <taxon>Actinomycetes</taxon>
        <taxon>Bifidobacteriales</taxon>
        <taxon>Bifidobacteriaceae</taxon>
        <taxon>Bifidobacterium</taxon>
    </lineage>
</organism>
<evidence type="ECO:0000255" key="1">
    <source>
        <dbReference type="HAMAP-Rule" id="MF_01326"/>
    </source>
</evidence>
<evidence type="ECO:0000305" key="2"/>